<accession>P0C2W0</accession>
<accession>Q56930</accession>
<accession>Q84GR6</accession>
<accession>Q93KR4</accession>
<reference key="1">
    <citation type="journal article" date="2003" name="Res. Microbiol.">
        <title>DNA sequence and analysis of the pYVa127/90 virulence plasmid of Yersinia enterocolitica strain A127/90.</title>
        <authorList>
            <person name="Foultier B."/>
            <person name="Cornelis G.R."/>
        </authorList>
    </citation>
    <scope>NUCLEOTIDE SEQUENCE [GENOMIC DNA]</scope>
    <source>
        <strain>A127/90 / Serotype O:8 / Biotype 1B</strain>
        <plasmid>pYVa127/90</plasmid>
    </source>
</reference>
<reference key="2">
    <citation type="journal article" date="1989" name="J. Bacteriol.">
        <title>Binding to collagen by Yersinia enterocolitica and Yersinia pseudotuberculosis: evidence for yopA-mediated and chromosomally encoded mechanisms.</title>
        <authorList>
            <person name="Emoedy L."/>
            <person name="Heesemann J."/>
            <person name="Wolf-Watz H."/>
            <person name="Skurnik M."/>
            <person name="Kapperud G."/>
            <person name="O'Toole P."/>
            <person name="Wadstroem T."/>
        </authorList>
    </citation>
    <scope>FUNCTION</scope>
    <source>
        <strain>Various strains</strain>
    </source>
</reference>
<reference key="3">
    <citation type="journal article" date="2003" name="J. Bacteriol.">
        <title>Molecular analysis of transport and oligomerization of the Yersinia enterocolitica adhesin YadA.</title>
        <authorList>
            <person name="Roggenkamp A."/>
            <person name="Ackermann N."/>
            <person name="Jacobi C.A."/>
            <person name="Truelzsch K."/>
            <person name="Hoffmann H."/>
            <person name="Heesemann J."/>
        </authorList>
    </citation>
    <scope>FUNCTION</scope>
    <scope>SUBUNIT</scope>
    <scope>SUBCELLULAR LOCATION</scope>
    <scope>DOMAIN</scope>
    <scope>MUTAGENESIS BY DOMAIN DELETION</scope>
    <source>
        <strain>ATCC 51871 / WA-314 / Serotype O:8</strain>
        <plasmid>pYVO8</plasmid>
    </source>
</reference>
<reference key="4">
    <citation type="journal article" date="2000" name="EMBO J.">
        <title>Structure and sequence analysis of Yersinia YadA and Moraxella UspAs reveal a novel class of adhesins.</title>
        <authorList>
            <person name="Hoiczyk E."/>
            <person name="Roggenkamp A."/>
            <person name="Reichenbecher M."/>
            <person name="Lupas A."/>
            <person name="Heesemann J."/>
        </authorList>
    </citation>
    <scope>MUTAGENESIS OF HIS-156 AND HIS-159</scope>
    <scope>MUTAGENESIS BY DOMAIN DELETION</scope>
    <source>
        <strain>ATCC 51871 / WA-314 / Serotype O:8</strain>
        <plasmid>pYVO8</plasmid>
    </source>
</reference>
<reference key="5">
    <citation type="journal article" date="2011" name="Infect. Immun.">
        <title>Trimeric autotransporter adhesin-dependent adherence of Bartonella henselae, Bartonella quintana, and Yersinia enterocolitica to matrix components and endothelial cells under static and dynamic flow conditions.</title>
        <authorList>
            <person name="Mueller N.F."/>
            <person name="Kaiser P.O."/>
            <person name="Linke D."/>
            <person name="Schwarz H."/>
            <person name="Riess T."/>
            <person name="Schaefer A."/>
            <person name="Eble J.A."/>
            <person name="Kempf V.A."/>
        </authorList>
    </citation>
    <scope>FUNCTION</scope>
    <scope>DISRUPTION PHENOTYPE</scope>
    <source>
        <strain>ATCC 51871 / WA-314 / Serotype O:8</strain>
    </source>
</reference>
<reference evidence="11 12 13 14" key="6">
    <citation type="journal article" date="2010" name="J. Struct. Biol.">
        <title>A transition from strong right-handed to canonical left-handed supercoiling in a conserved coiled-coil segment of trimeric autotransporter adhesins.</title>
        <authorList>
            <person name="Alvarez B.H."/>
            <person name="Gruber M."/>
            <person name="Ursinus A."/>
            <person name="Dunin-Horkawicz S."/>
            <person name="Lupas A.N."/>
            <person name="Zeth K."/>
        </authorList>
    </citation>
    <scope>X-RAY CRYSTALLOGRAPHY (1.50 ANGSTROMS) OF 333-396 OF WILD-TYPE AND MUTANTS</scope>
    <scope>SUBUNIT</scope>
    <scope>DOMAIN</scope>
    <source>
        <strain>Serotype O:8</strain>
    </source>
</reference>
<geneLocation type="plasmid">
    <name>pYVa127/90</name>
</geneLocation>
<geneLocation type="plasmid">
    <name>pYVO8</name>
</geneLocation>
<evidence type="ECO:0000250" key="1">
    <source>
        <dbReference type="UniProtKB" id="A1JUB7"/>
    </source>
</evidence>
<evidence type="ECO:0000255" key="2"/>
<evidence type="ECO:0000269" key="3">
    <source>
    </source>
</evidence>
<evidence type="ECO:0000269" key="4">
    <source>
    </source>
</evidence>
<evidence type="ECO:0000269" key="5">
    <source>
    </source>
</evidence>
<evidence type="ECO:0000269" key="6">
    <source>
    </source>
</evidence>
<evidence type="ECO:0000269" key="7">
    <source>
    </source>
</evidence>
<evidence type="ECO:0000305" key="8"/>
<evidence type="ECO:0000305" key="9">
    <source>
    </source>
</evidence>
<evidence type="ECO:0000305" key="10">
    <source>
    </source>
</evidence>
<evidence type="ECO:0007744" key="11">
    <source>
        <dbReference type="PDB" id="3H7X"/>
    </source>
</evidence>
<evidence type="ECO:0007744" key="12">
    <source>
        <dbReference type="PDB" id="3H7Z"/>
    </source>
</evidence>
<evidence type="ECO:0007744" key="13">
    <source>
        <dbReference type="PDB" id="3LT6"/>
    </source>
</evidence>
<evidence type="ECO:0007744" key="14">
    <source>
        <dbReference type="PDB" id="3LT7"/>
    </source>
</evidence>
<evidence type="ECO:0007829" key="15">
    <source>
        <dbReference type="PDB" id="3LT7"/>
    </source>
</evidence>
<sequence length="422" mass="44155">MTKDFKISVSAALISALFSSPYAFANNDEVHFTAVQISPNSDPDSHVMIFQPEVRAPGGTNALAKGTHSIAVGASAEAAERAAVAVGAGSIATGVNSVAIGPLSKALGDSAVTYGAGSTAQKDGVAIGARASTSDTGVAVGFNSKVDAKNSVSIGHSSHVAVDHDYSIAIGDRSKTDRKNSVSIGHESLNRQLTHLAAGTKDTDAVNVAQLKKEIEKTQENANKKSAEVLGIANNYTDSKSAETLENARKEAFDLSNDALDMAKKHSNSVARTTLETAEEHTNKKSAETLASANVYADSKSSHTLKTANSYTDVTVSNSTKKAIRESNQYTDHKFHQLDNRLDKLDTRVDKGLASSAALNSLFQPYGVGKVNFTAGVGGYRSSQALAIGSGYRVNESVALKAGVAYAGSSDVMYNASFNIEW</sequence>
<comment type="function">
    <text evidence="4 6 7">Collagen-binding outer membrane protein forming a fibrillar matrix on the bacterial cell surface. Promotes initial attachment and invasion of eukaryotic cells. Also protects the bacteria by being responsible for agglutination, serum resistance, complement inactivation and phagocytosis resistance.</text>
</comment>
<comment type="subunit">
    <text evidence="4 5">Homotrimer.</text>
</comment>
<comment type="subcellular location">
    <subcellularLocation>
        <location evidence="4">Cell surface</location>
    </subcellularLocation>
    <subcellularLocation>
        <location evidence="4">Cell outer membrane</location>
    </subcellularLocation>
    <text evidence="4">The C-terminal translocator domain is localized in the outer membrane and the passenger domain is at the cell surface.</text>
</comment>
<comment type="domain">
    <text evidence="4 5">The signal peptide, cleaved at the inner membrane, guides the autotransporter protein to the periplasmic space. Then, insertion of the C-terminal translocator domain in the outer membrane forms a hydrophilic pore for the translocation of the passenger domain to the bacterial cell surface (PubMed:12813066). The crystallized section of the passenger domain is an entwined trimer, and forms a bent coiled coil 8 nm long and 2.2 nm in diameter. It includes a transition from a right-handed to left-handed coiled coil which occurs over 14 residues (PubMed:20178846).</text>
</comment>
<comment type="disruption phenotype">
    <text evidence="6">Decreased binding to host cells and to host collagen I under dynamic flow conditions.</text>
</comment>
<comment type="similarity">
    <text evidence="8">Belongs to the autotransporter-2 (AT-2) (TC 1.B.40) family.</text>
</comment>
<proteinExistence type="evidence at protein level"/>
<dbReference type="EMBL" id="AY150843">
    <property type="protein sequence ID" value="AAN37524.1"/>
    <property type="molecule type" value="Genomic_DNA"/>
</dbReference>
<dbReference type="RefSeq" id="NP_783714.1">
    <property type="nucleotide sequence ID" value="NC_004564.1"/>
</dbReference>
<dbReference type="RefSeq" id="WP_011100755.1">
    <property type="nucleotide sequence ID" value="NC_004564.1"/>
</dbReference>
<dbReference type="PDB" id="3H7X">
    <property type="method" value="X-ray"/>
    <property type="resolution" value="2.00 A"/>
    <property type="chains" value="A/B/C/D/E/F=299-362"/>
</dbReference>
<dbReference type="PDB" id="3H7Z">
    <property type="method" value="X-ray"/>
    <property type="resolution" value="2.51 A"/>
    <property type="chains" value="A=303-362"/>
</dbReference>
<dbReference type="PDB" id="3LT6">
    <property type="method" value="X-ray"/>
    <property type="resolution" value="1.80 A"/>
    <property type="chains" value="A/B/C/D/E/F=333-396"/>
</dbReference>
<dbReference type="PDB" id="3LT7">
    <property type="method" value="X-ray"/>
    <property type="resolution" value="1.50 A"/>
    <property type="chains" value="A/B/C/D/E/F=333-396"/>
</dbReference>
<dbReference type="PDBsum" id="3H7X"/>
<dbReference type="PDBsum" id="3H7Z"/>
<dbReference type="PDBsum" id="3LT6"/>
<dbReference type="PDBsum" id="3LT7"/>
<dbReference type="BMRB" id="P0C2W0"/>
<dbReference type="SMR" id="P0C2W0"/>
<dbReference type="TCDB" id="1.B.40.1.1">
    <property type="family name" value="the autotransporter-2 (at-2) family"/>
</dbReference>
<dbReference type="EvolutionaryTrace" id="P0C2W0"/>
<dbReference type="GO" id="GO:0009279">
    <property type="term" value="C:cell outer membrane"/>
    <property type="evidence" value="ECO:0007669"/>
    <property type="project" value="UniProtKB-SubCell"/>
</dbReference>
<dbReference type="GO" id="GO:0009986">
    <property type="term" value="C:cell surface"/>
    <property type="evidence" value="ECO:0007669"/>
    <property type="project" value="UniProtKB-SubCell"/>
</dbReference>
<dbReference type="GO" id="GO:0005518">
    <property type="term" value="F:collagen binding"/>
    <property type="evidence" value="ECO:0007669"/>
    <property type="project" value="InterPro"/>
</dbReference>
<dbReference type="GO" id="GO:0007155">
    <property type="term" value="P:cell adhesion"/>
    <property type="evidence" value="ECO:0007669"/>
    <property type="project" value="UniProtKB-KW"/>
</dbReference>
<dbReference type="GO" id="GO:0015031">
    <property type="term" value="P:protein transport"/>
    <property type="evidence" value="ECO:0007669"/>
    <property type="project" value="UniProtKB-KW"/>
</dbReference>
<dbReference type="Gene3D" id="3.30.1300.30">
    <property type="entry name" value="GSPII I/J protein-like"/>
    <property type="match status" value="1"/>
</dbReference>
<dbReference type="Gene3D" id="2.150.10.10">
    <property type="entry name" value="Serralysin-like metalloprotease, C-terminal"/>
    <property type="match status" value="1"/>
</dbReference>
<dbReference type="InterPro" id="IPR008640">
    <property type="entry name" value="Adhesin_Head_dom"/>
</dbReference>
<dbReference type="InterPro" id="IPR008635">
    <property type="entry name" value="Coiled_stalk_dom"/>
</dbReference>
<dbReference type="InterPro" id="IPR008126">
    <property type="entry name" value="OM_adhesion_Yersinia"/>
</dbReference>
<dbReference type="InterPro" id="IPR045584">
    <property type="entry name" value="Pilin-like"/>
</dbReference>
<dbReference type="InterPro" id="IPR011049">
    <property type="entry name" value="Serralysin-like_metalloprot_C"/>
</dbReference>
<dbReference type="InterPro" id="IPR005594">
    <property type="entry name" value="YadA_C"/>
</dbReference>
<dbReference type="NCBIfam" id="NF033478">
    <property type="entry name" value="YadA_autotrans"/>
    <property type="match status" value="1"/>
</dbReference>
<dbReference type="Pfam" id="PF03895">
    <property type="entry name" value="YadA_anchor"/>
    <property type="match status" value="1"/>
</dbReference>
<dbReference type="Pfam" id="PF05658">
    <property type="entry name" value="YadA_head"/>
    <property type="match status" value="5"/>
</dbReference>
<dbReference type="Pfam" id="PF05662">
    <property type="entry name" value="YadA_stalk"/>
    <property type="match status" value="1"/>
</dbReference>
<dbReference type="PRINTS" id="PR01756">
    <property type="entry name" value="OMADHESIN"/>
</dbReference>
<dbReference type="SUPFAM" id="SSF101967">
    <property type="entry name" value="Adhesin YadA, collagen-binding domain"/>
    <property type="match status" value="1"/>
</dbReference>
<dbReference type="SUPFAM" id="SSF54523">
    <property type="entry name" value="Pili subunits"/>
    <property type="match status" value="1"/>
</dbReference>
<feature type="signal peptide" evidence="2">
    <location>
        <begin position="1"/>
        <end position="25"/>
    </location>
</feature>
<feature type="chain" id="PRO_0000022700" description="Adhesin YadA">
    <location>
        <begin position="26"/>
        <end position="422"/>
    </location>
</feature>
<feature type="transmembrane region" description="Beta stranded" evidence="1">
    <location>
        <begin position="369"/>
        <end position="379"/>
    </location>
</feature>
<feature type="transmembrane region" description="Beta stranded" evidence="1">
    <location>
        <begin position="383"/>
        <end position="394"/>
    </location>
</feature>
<feature type="transmembrane region" description="Beta stranded" evidence="1">
    <location>
        <begin position="401"/>
        <end position="407"/>
    </location>
</feature>
<feature type="transmembrane region" description="Beta stranded" evidence="1">
    <location>
        <begin position="411"/>
        <end position="422"/>
    </location>
</feature>
<feature type="region of interest" description="Surface exposed passenger domain" evidence="9">
    <location>
        <begin position="26"/>
        <end position="330"/>
    </location>
</feature>
<feature type="region of interest" description="Outer membrane translocation of the passenger domain" evidence="9">
    <location>
        <begin position="331"/>
        <end position="369"/>
    </location>
</feature>
<feature type="region of interest" description="Translocator domain" evidence="9">
    <location>
        <begin position="370"/>
        <end position="422"/>
    </location>
</feature>
<feature type="coiled-coil region" evidence="10">
    <location>
        <begin position="216"/>
        <end position="362"/>
    </location>
</feature>
<feature type="mutagenesis site" description="Loss of collagen-binding activity." evidence="3">
    <original>H</original>
    <variation>Y</variation>
    <location>
        <position position="156"/>
    </location>
</feature>
<feature type="mutagenesis site" description="Loss of collagen-binding activity." evidence="3">
    <original>H</original>
    <variation>Y</variation>
    <location>
        <position position="159"/>
    </location>
</feature>
<feature type="helix" evidence="15">
    <location>
        <begin position="302"/>
        <end position="352"/>
    </location>
</feature>
<feature type="helix" evidence="15">
    <location>
        <begin position="354"/>
        <end position="361"/>
    </location>
</feature>
<name>YADA2_YEREN</name>
<organism>
    <name type="scientific">Yersinia enterocolitica</name>
    <dbReference type="NCBI Taxonomy" id="630"/>
    <lineage>
        <taxon>Bacteria</taxon>
        <taxon>Pseudomonadati</taxon>
        <taxon>Pseudomonadota</taxon>
        <taxon>Gammaproteobacteria</taxon>
        <taxon>Enterobacterales</taxon>
        <taxon>Yersiniaceae</taxon>
        <taxon>Yersinia</taxon>
    </lineage>
</organism>
<keyword id="KW-0002">3D-structure</keyword>
<keyword id="KW-0130">Cell adhesion</keyword>
<keyword id="KW-0998">Cell outer membrane</keyword>
<keyword id="KW-0175">Coiled coil</keyword>
<keyword id="KW-0472">Membrane</keyword>
<keyword id="KW-0614">Plasmid</keyword>
<keyword id="KW-0653">Protein transport</keyword>
<keyword id="KW-0732">Signal</keyword>
<keyword id="KW-0812">Transmembrane</keyword>
<keyword id="KW-1134">Transmembrane beta strand</keyword>
<keyword id="KW-0813">Transport</keyword>
<keyword id="KW-0843">Virulence</keyword>
<protein>
    <recommendedName>
        <fullName>Adhesin YadA</fullName>
    </recommendedName>
    <alternativeName>
        <fullName evidence="8">Type 5 secretion system autotransporter YadA</fullName>
    </alternativeName>
</protein>
<gene>
    <name type="primary">yadA</name>
</gene>